<comment type="function">
    <text evidence="1">The heterodimer acts as both an ATP-dependent DNA helicase and an ATP-dependent, dual-direction single-stranded exonuclease. Recognizes the chi site generating a DNA molecule suitable for the initiation of homologous recombination. The AddA nuclease domain is required for chi fragment generation; this subunit has the helicase and 3' -&gt; 5' nuclease activities.</text>
</comment>
<comment type="catalytic activity">
    <reaction evidence="1">
        <text>Couples ATP hydrolysis with the unwinding of duplex DNA by translocating in the 3'-5' direction.</text>
        <dbReference type="EC" id="5.6.2.4"/>
    </reaction>
</comment>
<comment type="catalytic activity">
    <reaction evidence="1">
        <text>ATP + H2O = ADP + phosphate + H(+)</text>
        <dbReference type="Rhea" id="RHEA:13065"/>
        <dbReference type="ChEBI" id="CHEBI:15377"/>
        <dbReference type="ChEBI" id="CHEBI:15378"/>
        <dbReference type="ChEBI" id="CHEBI:30616"/>
        <dbReference type="ChEBI" id="CHEBI:43474"/>
        <dbReference type="ChEBI" id="CHEBI:456216"/>
        <dbReference type="EC" id="5.6.2.4"/>
    </reaction>
</comment>
<comment type="cofactor">
    <cofactor evidence="1">
        <name>Mg(2+)</name>
        <dbReference type="ChEBI" id="CHEBI:18420"/>
    </cofactor>
</comment>
<comment type="subunit">
    <text evidence="1">Heterodimer of AddA and AddB/RexB.</text>
</comment>
<comment type="similarity">
    <text evidence="1">Belongs to the helicase family. AddA subfamily.</text>
</comment>
<feature type="chain" id="PRO_0000379299" description="ATP-dependent helicase/nuclease subunit A">
    <location>
        <begin position="1"/>
        <end position="1235"/>
    </location>
</feature>
<feature type="domain" description="UvrD-like helicase ATP-binding" evidence="1">
    <location>
        <begin position="12"/>
        <end position="482"/>
    </location>
</feature>
<feature type="domain" description="UvrD-like helicase C-terminal" evidence="1">
    <location>
        <begin position="509"/>
        <end position="800"/>
    </location>
</feature>
<feature type="binding site" evidence="1">
    <location>
        <begin position="33"/>
        <end position="40"/>
    </location>
    <ligand>
        <name>ATP</name>
        <dbReference type="ChEBI" id="CHEBI:30616"/>
    </ligand>
</feature>
<organism>
    <name type="scientific">Listeria welshimeri serovar 6b (strain ATCC 35897 / DSM 20650 / CCUG 15529 / CIP 8149 / NCTC 11857 / SLCC 5334 / V8)</name>
    <dbReference type="NCBI Taxonomy" id="386043"/>
    <lineage>
        <taxon>Bacteria</taxon>
        <taxon>Bacillati</taxon>
        <taxon>Bacillota</taxon>
        <taxon>Bacilli</taxon>
        <taxon>Bacillales</taxon>
        <taxon>Listeriaceae</taxon>
        <taxon>Listeria</taxon>
    </lineage>
</organism>
<name>ADDA_LISW6</name>
<protein>
    <recommendedName>
        <fullName evidence="1">ATP-dependent helicase/nuclease subunit A</fullName>
        <ecNumber evidence="1">3.1.-.-</ecNumber>
        <ecNumber evidence="1">5.6.2.4</ecNumber>
    </recommendedName>
    <alternativeName>
        <fullName evidence="1">ATP-dependent helicase/nuclease AddA</fullName>
    </alternativeName>
    <alternativeName>
        <fullName evidence="1">DNA 3'-5' helicase AddA</fullName>
    </alternativeName>
</protein>
<evidence type="ECO:0000255" key="1">
    <source>
        <dbReference type="HAMAP-Rule" id="MF_01451"/>
    </source>
</evidence>
<keyword id="KW-0067">ATP-binding</keyword>
<keyword id="KW-0227">DNA damage</keyword>
<keyword id="KW-0234">DNA repair</keyword>
<keyword id="KW-0238">DNA-binding</keyword>
<keyword id="KW-0269">Exonuclease</keyword>
<keyword id="KW-0347">Helicase</keyword>
<keyword id="KW-0378">Hydrolase</keyword>
<keyword id="KW-0413">Isomerase</keyword>
<keyword id="KW-0540">Nuclease</keyword>
<keyword id="KW-0547">Nucleotide-binding</keyword>
<sequence>MGLNIPEKPVNTLWTDDQWKAIQANGNNILVAAAAGSGKTAVLVTRIIEKLVDETGNLNVDELLIVTFTNASAAEMKYRIGKSLEEALSQNPDSSHLKKQVALLNYASISTLHSFCLEIIRKHYFEADIDPNFRLIEPIESSMIRDEVLEELLEKEYSIANNEAFFHLVESFTGDRTDAELHMLISKLYDFSRANPNPDLWLEQMVNFYDTKDINSITELPYFPIIKEDIELRINQAKSYLLNAIEYASENNGPAPYLETLENDLAQINTLSNISWTNWQDVKLRVESMDFKRIPSLKNKSDYDEEYVEETKRFRDAAKKEIKNVLVDWFSREETNYLADLEKMKPDIKTISELVKNFANNFFEEKQRRGVLDFNDLEHLALKILLKNDVPSDVAKSYQKQFKEVLIDEYQDTNMVQETILLLVTNSEESKGNLFMVGDVKQSIYRFRLAEPTLFMTKYQEYQQNGEGEGIRIDLSQNFRSRKEVLDATNFIFHQLMDKHVAEIDYDEAAELTLGANFPKSNHMATELLLIDMKSNENESEDELSPQELQKNQVEARAIATKIREMIDNKFPIYDKKLQQNRSIQYRDIVILSRAMTSAPDMEEAMKVQDIPFYASNNSGYFETTEVATMIALLKVIDNPYQDIPLAAVLRSPIVGLNEEELGQIRMAKKKGYFFDALLAYKDITVSAAADRISDFITQLNNWRELSIRENLTALIWQIYQETNFYEFVGGLPGGKQRQANLRALYDRANQYEKTAFRGLFRFVRFVERLEVRGDDLGTAKTLGEKEDVVRMMTIHASKGLEFPVVIISGLSKKFNMRDIYSKTLLDKDYGFASNYRDIEKMIVYPTIMQQAIKQKKSREMIAEEMRVLYVALTRAEEKLILTATVPDFEKTSKNWLQVSNQKETILPASIRAKAKCYLDWIGNTIIRHTSFKDLLCEERIQTLPTEMKLQIEIKTKEMFLTTELEEHKADNWLENVKAHEPVPVQSAYKDEIERFMNYKYKDVAATEIRAKQSVTELKRQFSLQDSWSDTSILKEFQKVSLDRPKFLQQNKLSATEIGTAMHTLMQAVSLTYKPSEKDLTSLLQSMQEKDILTEAQIKAINIKQIMGFFDSPLGETVLQKSDQVKREVPFSYLLPVAKLYKQSDLEEHVLIQGVVDSMIEEEDAITLIDYKTDKIEGRYANWEAAEKVMKERYQIQIKLYAEAIQAITGKKVSNAYLYFFDGQHICQINIEEGF</sequence>
<accession>A0AL18</accession>
<gene>
    <name evidence="1" type="primary">addA</name>
    <name type="ordered locus">lwe2282</name>
</gene>
<dbReference type="EC" id="3.1.-.-" evidence="1"/>
<dbReference type="EC" id="5.6.2.4" evidence="1"/>
<dbReference type="EMBL" id="AM263198">
    <property type="protein sequence ID" value="CAK21700.1"/>
    <property type="molecule type" value="Genomic_DNA"/>
</dbReference>
<dbReference type="RefSeq" id="WP_011703031.1">
    <property type="nucleotide sequence ID" value="NC_008555.1"/>
</dbReference>
<dbReference type="SMR" id="A0AL18"/>
<dbReference type="STRING" id="386043.lwe2282"/>
<dbReference type="GeneID" id="61190186"/>
<dbReference type="KEGG" id="lwe:lwe2282"/>
<dbReference type="eggNOG" id="COG1074">
    <property type="taxonomic scope" value="Bacteria"/>
</dbReference>
<dbReference type="HOGENOM" id="CLU_001114_3_1_9"/>
<dbReference type="OrthoDB" id="9810135at2"/>
<dbReference type="Proteomes" id="UP000000779">
    <property type="component" value="Chromosome"/>
</dbReference>
<dbReference type="GO" id="GO:0005829">
    <property type="term" value="C:cytosol"/>
    <property type="evidence" value="ECO:0007669"/>
    <property type="project" value="TreeGrafter"/>
</dbReference>
<dbReference type="GO" id="GO:0033202">
    <property type="term" value="C:DNA helicase complex"/>
    <property type="evidence" value="ECO:0007669"/>
    <property type="project" value="TreeGrafter"/>
</dbReference>
<dbReference type="GO" id="GO:0043138">
    <property type="term" value="F:3'-5' DNA helicase activity"/>
    <property type="evidence" value="ECO:0007669"/>
    <property type="project" value="UniProtKB-UniRule"/>
</dbReference>
<dbReference type="GO" id="GO:0008408">
    <property type="term" value="F:3'-5' exonuclease activity"/>
    <property type="evidence" value="ECO:0007669"/>
    <property type="project" value="UniProtKB-UniRule"/>
</dbReference>
<dbReference type="GO" id="GO:0005524">
    <property type="term" value="F:ATP binding"/>
    <property type="evidence" value="ECO:0007669"/>
    <property type="project" value="UniProtKB-UniRule"/>
</dbReference>
<dbReference type="GO" id="GO:0016887">
    <property type="term" value="F:ATP hydrolysis activity"/>
    <property type="evidence" value="ECO:0007669"/>
    <property type="project" value="RHEA"/>
</dbReference>
<dbReference type="GO" id="GO:0003690">
    <property type="term" value="F:double-stranded DNA binding"/>
    <property type="evidence" value="ECO:0007669"/>
    <property type="project" value="UniProtKB-UniRule"/>
</dbReference>
<dbReference type="GO" id="GO:0000724">
    <property type="term" value="P:double-strand break repair via homologous recombination"/>
    <property type="evidence" value="ECO:0007669"/>
    <property type="project" value="UniProtKB-UniRule"/>
</dbReference>
<dbReference type="CDD" id="cd17932">
    <property type="entry name" value="DEXQc_UvrD"/>
    <property type="match status" value="1"/>
</dbReference>
<dbReference type="FunFam" id="3.40.50.300:FF:001164">
    <property type="entry name" value="ATP-dependent helicase/nuclease subunit A"/>
    <property type="match status" value="1"/>
</dbReference>
<dbReference type="FunFam" id="3.40.50.300:FF:001187">
    <property type="entry name" value="ATP-dependent helicase/nuclease subunit A"/>
    <property type="match status" value="1"/>
</dbReference>
<dbReference type="FunFam" id="3.40.50.300:FF:001196">
    <property type="entry name" value="ATP-dependent helicase/nuclease subunit A"/>
    <property type="match status" value="1"/>
</dbReference>
<dbReference type="FunFam" id="3.40.50.300:FF:001236">
    <property type="entry name" value="ATP-dependent helicase/nuclease subunit A"/>
    <property type="match status" value="1"/>
</dbReference>
<dbReference type="Gene3D" id="3.90.320.10">
    <property type="match status" value="1"/>
</dbReference>
<dbReference type="Gene3D" id="3.40.50.300">
    <property type="entry name" value="P-loop containing nucleotide triphosphate hydrolases"/>
    <property type="match status" value="4"/>
</dbReference>
<dbReference type="HAMAP" id="MF_01451">
    <property type="entry name" value="AddA"/>
    <property type="match status" value="1"/>
</dbReference>
<dbReference type="InterPro" id="IPR014152">
    <property type="entry name" value="AddA"/>
</dbReference>
<dbReference type="InterPro" id="IPR014017">
    <property type="entry name" value="DNA_helicase_UvrD-like_C"/>
</dbReference>
<dbReference type="InterPro" id="IPR000212">
    <property type="entry name" value="DNA_helicase_UvrD/REP"/>
</dbReference>
<dbReference type="InterPro" id="IPR027417">
    <property type="entry name" value="P-loop_NTPase"/>
</dbReference>
<dbReference type="InterPro" id="IPR011604">
    <property type="entry name" value="PDDEXK-like_dom_sf"/>
</dbReference>
<dbReference type="InterPro" id="IPR038726">
    <property type="entry name" value="PDDEXK_AddAB-type"/>
</dbReference>
<dbReference type="InterPro" id="IPR011335">
    <property type="entry name" value="Restrct_endonuc-II-like"/>
</dbReference>
<dbReference type="InterPro" id="IPR014016">
    <property type="entry name" value="UvrD-like_ATP-bd"/>
</dbReference>
<dbReference type="NCBIfam" id="TIGR02785">
    <property type="entry name" value="addA_Gpos"/>
    <property type="match status" value="1"/>
</dbReference>
<dbReference type="PANTHER" id="PTHR11070:SF48">
    <property type="entry name" value="ATP-DEPENDENT HELICASE_NUCLEASE SUBUNIT A"/>
    <property type="match status" value="1"/>
</dbReference>
<dbReference type="PANTHER" id="PTHR11070">
    <property type="entry name" value="UVRD / RECB / PCRA DNA HELICASE FAMILY MEMBER"/>
    <property type="match status" value="1"/>
</dbReference>
<dbReference type="Pfam" id="PF12705">
    <property type="entry name" value="PDDEXK_1"/>
    <property type="match status" value="1"/>
</dbReference>
<dbReference type="Pfam" id="PF00580">
    <property type="entry name" value="UvrD-helicase"/>
    <property type="match status" value="1"/>
</dbReference>
<dbReference type="Pfam" id="PF13361">
    <property type="entry name" value="UvrD_C"/>
    <property type="match status" value="1"/>
</dbReference>
<dbReference type="SUPFAM" id="SSF52540">
    <property type="entry name" value="P-loop containing nucleoside triphosphate hydrolases"/>
    <property type="match status" value="1"/>
</dbReference>
<dbReference type="SUPFAM" id="SSF52980">
    <property type="entry name" value="Restriction endonuclease-like"/>
    <property type="match status" value="1"/>
</dbReference>
<dbReference type="PROSITE" id="PS51198">
    <property type="entry name" value="UVRD_HELICASE_ATP_BIND"/>
    <property type="match status" value="1"/>
</dbReference>
<dbReference type="PROSITE" id="PS51217">
    <property type="entry name" value="UVRD_HELICASE_CTER"/>
    <property type="match status" value="1"/>
</dbReference>
<reference key="1">
    <citation type="journal article" date="2006" name="J. Bacteriol.">
        <title>Whole-genome sequence of Listeria welshimeri reveals common steps in genome reduction with Listeria innocua as compared to Listeria monocytogenes.</title>
        <authorList>
            <person name="Hain T."/>
            <person name="Steinweg C."/>
            <person name="Kuenne C.T."/>
            <person name="Billion A."/>
            <person name="Ghai R."/>
            <person name="Chatterjee S.S."/>
            <person name="Domann E."/>
            <person name="Kaerst U."/>
            <person name="Goesmann A."/>
            <person name="Bekel T."/>
            <person name="Bartels D."/>
            <person name="Kaiser O."/>
            <person name="Meyer F."/>
            <person name="Puehler A."/>
            <person name="Weisshaar B."/>
            <person name="Wehland J."/>
            <person name="Liang C."/>
            <person name="Dandekar T."/>
            <person name="Lampidis R."/>
            <person name="Kreft J."/>
            <person name="Goebel W."/>
            <person name="Chakraborty T."/>
        </authorList>
    </citation>
    <scope>NUCLEOTIDE SEQUENCE [LARGE SCALE GENOMIC DNA]</scope>
    <source>
        <strain>ATCC 35897 / DSM 20650 / CCUG 15529 / CIP 8149 / NCTC 11857 / SLCC 5334 / V8</strain>
    </source>
</reference>
<proteinExistence type="inferred from homology"/>